<organism>
    <name type="scientific">Rickettsia prowazekii (strain Madrid E)</name>
    <dbReference type="NCBI Taxonomy" id="272947"/>
    <lineage>
        <taxon>Bacteria</taxon>
        <taxon>Pseudomonadati</taxon>
        <taxon>Pseudomonadota</taxon>
        <taxon>Alphaproteobacteria</taxon>
        <taxon>Rickettsiales</taxon>
        <taxon>Rickettsiaceae</taxon>
        <taxon>Rickettsieae</taxon>
        <taxon>Rickettsia</taxon>
        <taxon>typhus group</taxon>
    </lineage>
</organism>
<reference key="1">
    <citation type="journal article" date="1998" name="Nature">
        <title>The genome sequence of Rickettsia prowazekii and the origin of mitochondria.</title>
        <authorList>
            <person name="Andersson S.G.E."/>
            <person name="Zomorodipour A."/>
            <person name="Andersson J.O."/>
            <person name="Sicheritz-Ponten T."/>
            <person name="Alsmark U.C.M."/>
            <person name="Podowski R.M."/>
            <person name="Naeslund A.K."/>
            <person name="Eriksson A.-S."/>
            <person name="Winkler H.H."/>
            <person name="Kurland C.G."/>
        </authorList>
    </citation>
    <scope>NUCLEOTIDE SEQUENCE [LARGE SCALE GENOMIC DNA]</scope>
    <source>
        <strain>Madrid E</strain>
    </source>
</reference>
<comment type="function">
    <text evidence="1">This protein is located at the 30S-50S ribosomal subunit interface and may play a role in the structure and function of the aminoacyl-tRNA binding site.</text>
</comment>
<comment type="similarity">
    <text evidence="2">Belongs to the bacterial ribosomal protein bL19 family.</text>
</comment>
<keyword id="KW-1185">Reference proteome</keyword>
<keyword id="KW-0687">Ribonucleoprotein</keyword>
<keyword id="KW-0689">Ribosomal protein</keyword>
<dbReference type="EMBL" id="AJ235270">
    <property type="protein sequence ID" value="CAA14581.1"/>
    <property type="molecule type" value="Genomic_DNA"/>
</dbReference>
<dbReference type="PIR" id="F71720">
    <property type="entry name" value="F71720"/>
</dbReference>
<dbReference type="RefSeq" id="NP_220504.1">
    <property type="nucleotide sequence ID" value="NC_000963.1"/>
</dbReference>
<dbReference type="RefSeq" id="WP_004597145.1">
    <property type="nucleotide sequence ID" value="NC_000963.1"/>
</dbReference>
<dbReference type="SMR" id="Q9ZE36"/>
<dbReference type="STRING" id="272947.gene:17555195"/>
<dbReference type="EnsemblBacteria" id="CAA14581">
    <property type="protein sequence ID" value="CAA14581"/>
    <property type="gene ID" value="CAA14581"/>
</dbReference>
<dbReference type="GeneID" id="57569240"/>
<dbReference type="KEGG" id="rpr:RP112"/>
<dbReference type="PATRIC" id="fig|272947.5.peg.114"/>
<dbReference type="eggNOG" id="COG0335">
    <property type="taxonomic scope" value="Bacteria"/>
</dbReference>
<dbReference type="HOGENOM" id="CLU_103507_1_0_5"/>
<dbReference type="OrthoDB" id="9803541at2"/>
<dbReference type="Proteomes" id="UP000002480">
    <property type="component" value="Chromosome"/>
</dbReference>
<dbReference type="GO" id="GO:0022625">
    <property type="term" value="C:cytosolic large ribosomal subunit"/>
    <property type="evidence" value="ECO:0007669"/>
    <property type="project" value="TreeGrafter"/>
</dbReference>
<dbReference type="GO" id="GO:0003735">
    <property type="term" value="F:structural constituent of ribosome"/>
    <property type="evidence" value="ECO:0007669"/>
    <property type="project" value="InterPro"/>
</dbReference>
<dbReference type="GO" id="GO:0006412">
    <property type="term" value="P:translation"/>
    <property type="evidence" value="ECO:0007669"/>
    <property type="project" value="UniProtKB-UniRule"/>
</dbReference>
<dbReference type="Gene3D" id="2.30.30.790">
    <property type="match status" value="1"/>
</dbReference>
<dbReference type="HAMAP" id="MF_00402">
    <property type="entry name" value="Ribosomal_bL19"/>
    <property type="match status" value="1"/>
</dbReference>
<dbReference type="InterPro" id="IPR001857">
    <property type="entry name" value="Ribosomal_bL19"/>
</dbReference>
<dbReference type="InterPro" id="IPR018257">
    <property type="entry name" value="Ribosomal_bL19_CS"/>
</dbReference>
<dbReference type="InterPro" id="IPR038657">
    <property type="entry name" value="Ribosomal_bL19_sf"/>
</dbReference>
<dbReference type="InterPro" id="IPR008991">
    <property type="entry name" value="Translation_prot_SH3-like_sf"/>
</dbReference>
<dbReference type="NCBIfam" id="TIGR01024">
    <property type="entry name" value="rplS_bact"/>
    <property type="match status" value="1"/>
</dbReference>
<dbReference type="PANTHER" id="PTHR15680:SF9">
    <property type="entry name" value="LARGE RIBOSOMAL SUBUNIT PROTEIN BL19M"/>
    <property type="match status" value="1"/>
</dbReference>
<dbReference type="PANTHER" id="PTHR15680">
    <property type="entry name" value="RIBOSOMAL PROTEIN L19"/>
    <property type="match status" value="1"/>
</dbReference>
<dbReference type="Pfam" id="PF01245">
    <property type="entry name" value="Ribosomal_L19"/>
    <property type="match status" value="1"/>
</dbReference>
<dbReference type="PIRSF" id="PIRSF002191">
    <property type="entry name" value="Ribosomal_L19"/>
    <property type="match status" value="1"/>
</dbReference>
<dbReference type="PRINTS" id="PR00061">
    <property type="entry name" value="RIBOSOMALL19"/>
</dbReference>
<dbReference type="SUPFAM" id="SSF50104">
    <property type="entry name" value="Translation proteins SH3-like domain"/>
    <property type="match status" value="1"/>
</dbReference>
<dbReference type="PROSITE" id="PS01015">
    <property type="entry name" value="RIBOSOMAL_L19"/>
    <property type="match status" value="1"/>
</dbReference>
<gene>
    <name type="primary">rplS</name>
    <name type="ordered locus">RP112</name>
</gene>
<sequence>MNIIDNFEQENIAKLTANKKIPDFEAGDTVKVTVKIIDKAIEKDGKEKLTERFQAYEGVVIAKRNRGITSSFLVRKISHGEGVERRFMTYSPIVHSIDVVKYGVVRRAKLYYLRHRNGKAARIREKLISRAKPKTAIS</sequence>
<feature type="chain" id="PRO_0000163519" description="Large ribosomal subunit protein bL19">
    <location>
        <begin position="1"/>
        <end position="138"/>
    </location>
</feature>
<protein>
    <recommendedName>
        <fullName evidence="2">Large ribosomal subunit protein bL19</fullName>
    </recommendedName>
    <alternativeName>
        <fullName>50S ribosomal protein L19</fullName>
    </alternativeName>
</protein>
<proteinExistence type="inferred from homology"/>
<evidence type="ECO:0000250" key="1"/>
<evidence type="ECO:0000305" key="2"/>
<accession>Q9ZE36</accession>
<name>RL19_RICPR</name>